<dbReference type="EC" id="3.1.-.-"/>
<dbReference type="EMBL" id="U14003">
    <property type="protein sequence ID" value="AAA97028.1"/>
    <property type="molecule type" value="Genomic_DNA"/>
</dbReference>
<dbReference type="EMBL" id="U00096">
    <property type="protein sequence ID" value="AAC77089.1"/>
    <property type="molecule type" value="Genomic_DNA"/>
</dbReference>
<dbReference type="EMBL" id="AP009048">
    <property type="protein sequence ID" value="BAE78130.1"/>
    <property type="molecule type" value="Genomic_DNA"/>
</dbReference>
<dbReference type="PIR" id="S56357">
    <property type="entry name" value="S56357"/>
</dbReference>
<dbReference type="RefSeq" id="NP_418552.1">
    <property type="nucleotide sequence ID" value="NC_000913.3"/>
</dbReference>
<dbReference type="RefSeq" id="WP_000398619.1">
    <property type="nucleotide sequence ID" value="NZ_SSZK01000018.1"/>
</dbReference>
<dbReference type="PDB" id="2LLZ">
    <property type="method" value="NMR"/>
    <property type="chains" value="A=1-98"/>
</dbReference>
<dbReference type="PDBsum" id="2LLZ"/>
<dbReference type="BMRB" id="P0AF61"/>
<dbReference type="SMR" id="P0AF61"/>
<dbReference type="BioGRID" id="4261767">
    <property type="interactions" value="11"/>
</dbReference>
<dbReference type="FunCoup" id="P0AF61">
    <property type="interactions" value="4"/>
</dbReference>
<dbReference type="STRING" id="511145.b4128"/>
<dbReference type="jPOST" id="P0AF61"/>
<dbReference type="PaxDb" id="511145-b4128"/>
<dbReference type="EnsemblBacteria" id="AAC77089">
    <property type="protein sequence ID" value="AAC77089"/>
    <property type="gene ID" value="b4128"/>
</dbReference>
<dbReference type="GeneID" id="93777704"/>
<dbReference type="GeneID" id="948646"/>
<dbReference type="KEGG" id="ecj:JW4089"/>
<dbReference type="KEGG" id="eco:b4128"/>
<dbReference type="PATRIC" id="fig|511145.12.peg.4259"/>
<dbReference type="EchoBASE" id="EB2361"/>
<dbReference type="HOGENOM" id="CLU_182150_0_0_6"/>
<dbReference type="InParanoid" id="P0AF61"/>
<dbReference type="OMA" id="DYFRQIY"/>
<dbReference type="OrthoDB" id="6571394at2"/>
<dbReference type="BioCyc" id="EcoCyc:G7830-MONOMER"/>
<dbReference type="BioCyc" id="MetaCyc:G7830-MONOMER"/>
<dbReference type="EvolutionaryTrace" id="P0AF61"/>
<dbReference type="PRO" id="PR:P0AF61"/>
<dbReference type="Proteomes" id="UP000000625">
    <property type="component" value="Chromosome"/>
</dbReference>
<dbReference type="GO" id="GO:0004521">
    <property type="term" value="F:RNA endonuclease activity"/>
    <property type="evidence" value="ECO:0000314"/>
    <property type="project" value="EcoCyc"/>
</dbReference>
<dbReference type="FunFam" id="3.30.70.2360:FF:000002">
    <property type="entry name" value="Endoribonuclease antitoxin GhoS"/>
    <property type="match status" value="1"/>
</dbReference>
<dbReference type="Gene3D" id="3.30.70.2360">
    <property type="match status" value="1"/>
</dbReference>
<dbReference type="InterPro" id="IPR022597">
    <property type="entry name" value="GhoS"/>
</dbReference>
<dbReference type="InterPro" id="IPR038241">
    <property type="entry name" value="GhoS_sf"/>
</dbReference>
<dbReference type="Pfam" id="PF11080">
    <property type="entry name" value="GhoS"/>
    <property type="match status" value="1"/>
</dbReference>
<sequence>MEGKNKFNTYVVSFDYPSSYSSVFLRLRSLMYDMNFSSIVADEYGIPRQLNENSFAITTSLAASEIEDLIRLKCLDLPDIDFDLNIMTVDDYFRQFYK</sequence>
<reference key="1">
    <citation type="journal article" date="1995" name="Nucleic Acids Res.">
        <title>Analysis of the Escherichia coli genome VI: DNA sequence of the region from 92.8 through 100 minutes.</title>
        <authorList>
            <person name="Burland V.D."/>
            <person name="Plunkett G. III"/>
            <person name="Sofia H.J."/>
            <person name="Daniels D.L."/>
            <person name="Blattner F.R."/>
        </authorList>
    </citation>
    <scope>NUCLEOTIDE SEQUENCE [LARGE SCALE GENOMIC DNA]</scope>
    <source>
        <strain>K12 / MG1655 / ATCC 47076</strain>
    </source>
</reference>
<reference key="2">
    <citation type="journal article" date="1997" name="Science">
        <title>The complete genome sequence of Escherichia coli K-12.</title>
        <authorList>
            <person name="Blattner F.R."/>
            <person name="Plunkett G. III"/>
            <person name="Bloch C.A."/>
            <person name="Perna N.T."/>
            <person name="Burland V."/>
            <person name="Riley M."/>
            <person name="Collado-Vides J."/>
            <person name="Glasner J.D."/>
            <person name="Rode C.K."/>
            <person name="Mayhew G.F."/>
            <person name="Gregor J."/>
            <person name="Davis N.W."/>
            <person name="Kirkpatrick H.A."/>
            <person name="Goeden M.A."/>
            <person name="Rose D.J."/>
            <person name="Mau B."/>
            <person name="Shao Y."/>
        </authorList>
    </citation>
    <scope>NUCLEOTIDE SEQUENCE [LARGE SCALE GENOMIC DNA]</scope>
    <source>
        <strain>K12 / MG1655 / ATCC 47076</strain>
    </source>
</reference>
<reference key="3">
    <citation type="journal article" date="2006" name="Mol. Syst. Biol.">
        <title>Highly accurate genome sequences of Escherichia coli K-12 strains MG1655 and W3110.</title>
        <authorList>
            <person name="Hayashi K."/>
            <person name="Morooka N."/>
            <person name="Yamamoto Y."/>
            <person name="Fujita K."/>
            <person name="Isono K."/>
            <person name="Choi S."/>
            <person name="Ohtsubo E."/>
            <person name="Baba T."/>
            <person name="Wanner B.L."/>
            <person name="Mori H."/>
            <person name="Horiuchi T."/>
        </authorList>
    </citation>
    <scope>NUCLEOTIDE SEQUENCE [LARGE SCALE GENOMIC DNA]</scope>
    <source>
        <strain>K12 / W3110 / ATCC 27325 / DSM 5911</strain>
    </source>
</reference>
<reference key="4">
    <citation type="journal article" date="2013" name="Environ. Microbiol.">
        <title>Type II toxin/antitoxin MqsR/MqsA controls type V toxin/antitoxin GhoT/GhoS.</title>
        <authorList>
            <person name="Wang X."/>
            <person name="Lord D.M."/>
            <person name="Hong S.H."/>
            <person name="Peti W."/>
            <person name="Benedik M.J."/>
            <person name="Page R."/>
            <person name="Wood T.K."/>
        </authorList>
    </citation>
    <scope>INDUCTION</scope>
    <source>
        <strain>K12 / BW25113</strain>
    </source>
</reference>
<reference key="5">
    <citation type="journal article" date="2014" name="Environ. Microbiol.">
        <title>Toxin GhoT of the GhoT/GhoS toxin/antitoxin system damages the cell membrane to reduce adenosine triphosphate and to reduce growth under stress.</title>
        <authorList>
            <person name="Cheng H.Y."/>
            <person name="Soo V.W."/>
            <person name="Islam S."/>
            <person name="McAnulty M.J."/>
            <person name="Benedik M.J."/>
            <person name="Wood T.K."/>
        </authorList>
    </citation>
    <scope>FUNCTION</scope>
    <scope>DISRUPTION PHENOTYPE</scope>
</reference>
<reference key="6">
    <citation type="journal article" date="2014" name="Sci. Rep.">
        <title>de novo synthesis of a bacterial toxin/antitoxin system.</title>
        <authorList>
            <person name="Soo V.W."/>
            <person name="Cheng H.Y."/>
            <person name="Kwan B.W."/>
            <person name="Wood T.K."/>
        </authorList>
    </citation>
    <scope>MUTAGENESIS OF LEU-25 AND MET-31</scope>
    <source>
        <strain>K12 / BW25113</strain>
    </source>
</reference>
<reference key="7">
    <citation type="journal article" date="2012" name="Nat. Chem. Biol.">
        <title>A new type V toxin-antitoxin system where mRNA for toxin GhoT is cleaved by antitoxin GhoS.</title>
        <authorList>
            <person name="Wang X."/>
            <person name="Lord D.M."/>
            <person name="Cheng H.Y."/>
            <person name="Osbourne D.O."/>
            <person name="Hong S.H."/>
            <person name="Sanchez-Torres V."/>
            <person name="Quiroga C."/>
            <person name="Zheng K."/>
            <person name="Herrmann T."/>
            <person name="Peti W."/>
            <person name="Benedik M.J."/>
            <person name="Page R."/>
            <person name="Wood T.K."/>
        </authorList>
    </citation>
    <scope>STRUCTURE BY NMR</scope>
    <scope>FUNCTION</scope>
    <scope>SUBUNIT</scope>
    <scope>PROTEIN STABILITY</scope>
    <scope>DISRUPTION PHENOTYPE</scope>
    <scope>MUTAGENESIS OF PHE-14; ASP-15; ARG-26; ARG-28 AND PHE-55</scope>
    <source>
        <strain>K12 / BW25113</strain>
    </source>
</reference>
<gene>
    <name evidence="5" type="primary">ghoS</name>
    <name evidence="6" type="synonym">arT</name>
    <name type="synonym">yjdK</name>
    <name type="ordered locus">b4128</name>
    <name type="ordered locus">JW4089</name>
</gene>
<accession>P0AF61</accession>
<accession>P39275</accession>
<accession>Q2M6H6</accession>
<proteinExistence type="evidence at protein level"/>
<organism>
    <name type="scientific">Escherichia coli (strain K12)</name>
    <dbReference type="NCBI Taxonomy" id="83333"/>
    <lineage>
        <taxon>Bacteria</taxon>
        <taxon>Pseudomonadati</taxon>
        <taxon>Pseudomonadota</taxon>
        <taxon>Gammaproteobacteria</taxon>
        <taxon>Enterobacterales</taxon>
        <taxon>Enterobacteriaceae</taxon>
        <taxon>Escherichia</taxon>
    </lineage>
</organism>
<name>GHOS_ECOLI</name>
<evidence type="ECO:0000269" key="1">
    <source>
    </source>
</evidence>
<evidence type="ECO:0000269" key="2">
    <source>
    </source>
</evidence>
<evidence type="ECO:0000269" key="3">
    <source>
    </source>
</evidence>
<evidence type="ECO:0000269" key="4">
    <source>
    </source>
</evidence>
<evidence type="ECO:0000303" key="5">
    <source>
    </source>
</evidence>
<evidence type="ECO:0000303" key="6">
    <source>
    </source>
</evidence>
<evidence type="ECO:0007829" key="7">
    <source>
        <dbReference type="PDB" id="2LLZ"/>
    </source>
</evidence>
<keyword id="KW-0002">3D-structure</keyword>
<keyword id="KW-0255">Endonuclease</keyword>
<keyword id="KW-0378">Hydrolase</keyword>
<keyword id="KW-0540">Nuclease</keyword>
<keyword id="KW-1185">Reference proteome</keyword>
<keyword id="KW-1277">Toxin-antitoxin system</keyword>
<keyword id="KW-0804">Transcription</keyword>
<keyword id="KW-0805">Transcription regulation</keyword>
<comment type="function">
    <text evidence="1 3">Antitoxin component of a type V toxin-antitoxin (TA) system. Neutralizes the toxic effects of toxin GhoT by digesting ghoT transcripts in a sequence-specific manner (PubMed:22941047). In concert with GhoT is involved in reducing cell growth during antibacterial stress (PubMed:24373067). Overexpression leads to transcript level reduction of 20 other mRNAs involved in purine or pyrimidine synthesis and transport. Not seen to bind its own promoter DNA (PubMed:22941047).</text>
</comment>
<comment type="subunit">
    <text evidence="1">Monomer.</text>
</comment>
<comment type="induction">
    <text evidence="2">Post-transcriptionally down-regulated by MqsR which acts on the ghoST transcript selectively, degrading the ghoS segment while leaving ghoT intact; conditions which induce MqsR (e.g. overexpression, nalidixic acid, azolocillin or H(2)O(2)) decrease ghoS expression and thus increase ghoT transcripts (PubMed:23289863).</text>
</comment>
<comment type="PTM">
    <text evidence="1">Unlike other TA proteinaceous antitoxins, this protein is stable with and without cellular stress; its structure has been determined in the absence of GhoT toxin.</text>
</comment>
<comment type="disruption phenotype">
    <text evidence="1 3">Essential; cannot be disrupted unless ghoT is also disrupted; in the double ghoS-ghoT mutant has no visible phenotype (PubMed:22941047, PubMed:24373067). Increased biofilm formation after 8 hours at 30 and 37 degrees Celsius, has risen higher by 24 hours at 37 degrees Celsius but has fallen by 24 hours at 30 degrees Celsius. Approximately 2-fold increase in swimming motility (PubMed:24373067). When single ghoT mutant is grown in the presence of antibiotics carbenicillin or cefoxitin initial metabolism is significantly increased over that of wild-type, after 14 hours wild-type is slightly less active. In a double ghoS-ghoT mutant in presence of the 2 antibiotics metabolism is significantly increased over that of wild-type, but by 9 hours wild-type has caught up and eventually has slightly greater metabolic rates (PubMed:24373067).</text>
</comment>
<comment type="miscellaneous">
    <text evidence="1">Has a similar 3D-structure to Cas2 proteins.</text>
</comment>
<comment type="miscellaneous">
    <text evidence="4">Can be modified to become a classic type II TA toxin (called ArT) which causes cells to become ghost-like, probably by broadening substrate RNA recognition; the toxic activity is independent of ghoT and mqsRA. Antitoxins to this evolved ArT toxin have been artificially evolved from antitoxins mqsA (a type II TA system) and toxI (a type I TA system).</text>
</comment>
<protein>
    <recommendedName>
        <fullName evidence="5">Endoribonuclease antitoxin GhoS</fullName>
        <ecNumber>3.1.-.-</ecNumber>
    </recommendedName>
    <alternativeName>
        <fullName>Antitoxin GhoS</fullName>
    </alternativeName>
</protein>
<feature type="chain" id="PRO_0000169733" description="Endoribonuclease antitoxin GhoS">
    <location>
        <begin position="1"/>
        <end position="98"/>
    </location>
</feature>
<feature type="mutagenesis site" description="Still digests ghoT RNA." evidence="1">
    <original>F</original>
    <variation>A</variation>
    <location>
        <position position="14"/>
    </location>
</feature>
<feature type="mutagenesis site" description="Still digests ghoT RNA." evidence="1">
    <original>D</original>
    <variation>A</variation>
    <location>
        <position position="15"/>
    </location>
</feature>
<feature type="mutagenesis site" description="Protein becomes toxic upon overexpression. Becomes classic type II TA toxin protein, increased cell persistence to ampicillin; when associated with L-31." evidence="4">
    <original>L</original>
    <variation>I</variation>
    <location>
        <position position="25"/>
    </location>
</feature>
<feature type="mutagenesis site" description="Slightly impaired digestion of ghoT RNA." evidence="1">
    <original>R</original>
    <variation>A</variation>
    <location>
        <position position="26"/>
    </location>
</feature>
<feature type="mutagenesis site" description="Reduced digestion of ghoT RNA, less efficient neutralization of GhoT in vivo." evidence="1">
    <original>R</original>
    <variation>A</variation>
    <location>
        <position position="28"/>
    </location>
</feature>
<feature type="mutagenesis site" description="Protein becomes toxic upon overexpression. Becomes classic type II TA toxin protein, increased cell persistence to ampicillin; when associated with I-25." evidence="4">
    <original>M</original>
    <variation>L</variation>
    <location>
        <position position="31"/>
    </location>
</feature>
<feature type="mutagenesis site" description="Reduced digestion of ghoT RNA." evidence="1">
    <original>F</original>
    <variation>A</variation>
    <location>
        <position position="55"/>
    </location>
</feature>
<feature type="strand" evidence="7">
    <location>
        <begin position="10"/>
        <end position="15"/>
    </location>
</feature>
<feature type="helix" evidence="7">
    <location>
        <begin position="18"/>
        <end position="20"/>
    </location>
</feature>
<feature type="helix" evidence="7">
    <location>
        <begin position="21"/>
        <end position="33"/>
    </location>
</feature>
<feature type="strand" evidence="7">
    <location>
        <begin position="36"/>
        <end position="41"/>
    </location>
</feature>
<feature type="strand" evidence="7">
    <location>
        <begin position="43"/>
        <end position="45"/>
    </location>
</feature>
<feature type="strand" evidence="7">
    <location>
        <begin position="47"/>
        <end position="49"/>
    </location>
</feature>
<feature type="strand" evidence="7">
    <location>
        <begin position="53"/>
        <end position="57"/>
    </location>
</feature>
<feature type="helix" evidence="7">
    <location>
        <begin position="63"/>
        <end position="72"/>
    </location>
</feature>
<feature type="helix" evidence="7">
    <location>
        <begin position="73"/>
        <end position="75"/>
    </location>
</feature>
<feature type="strand" evidence="7">
    <location>
        <begin position="83"/>
        <end position="88"/>
    </location>
</feature>
<feature type="helix" evidence="7">
    <location>
        <begin position="89"/>
        <end position="93"/>
    </location>
</feature>